<dbReference type="EC" id="2.7.1.21" evidence="1"/>
<dbReference type="EMBL" id="AF243438">
    <property type="protein sequence ID" value="AAG14216.1"/>
    <property type="molecule type" value="Genomic_DNA"/>
</dbReference>
<dbReference type="RefSeq" id="YP_001033951.1">
    <property type="nucleotide sequence ID" value="NC_002229.3"/>
</dbReference>
<dbReference type="SMR" id="Q9E6P5"/>
<dbReference type="GeneID" id="4811496"/>
<dbReference type="KEGG" id="vg:4811496"/>
<dbReference type="Proteomes" id="UP000008072">
    <property type="component" value="Segment"/>
</dbReference>
<dbReference type="GO" id="GO:0005524">
    <property type="term" value="F:ATP binding"/>
    <property type="evidence" value="ECO:0007669"/>
    <property type="project" value="UniProtKB-KW"/>
</dbReference>
<dbReference type="GO" id="GO:0004797">
    <property type="term" value="F:thymidine kinase activity"/>
    <property type="evidence" value="ECO:0007669"/>
    <property type="project" value="UniProtKB-EC"/>
</dbReference>
<dbReference type="GO" id="GO:0071897">
    <property type="term" value="P:DNA biosynthetic process"/>
    <property type="evidence" value="ECO:0007669"/>
    <property type="project" value="UniProtKB-KW"/>
</dbReference>
<dbReference type="GO" id="GO:0006230">
    <property type="term" value="P:TMP biosynthetic process"/>
    <property type="evidence" value="ECO:0007669"/>
    <property type="project" value="InterPro"/>
</dbReference>
<dbReference type="Gene3D" id="3.40.50.300">
    <property type="entry name" value="P-loop containing nucleotide triphosphate hydrolases"/>
    <property type="match status" value="1"/>
</dbReference>
<dbReference type="HAMAP" id="MF_04029">
    <property type="entry name" value="HSV_KITH"/>
    <property type="match status" value="1"/>
</dbReference>
<dbReference type="InterPro" id="IPR001889">
    <property type="entry name" value="Herpes_TK"/>
</dbReference>
<dbReference type="InterPro" id="IPR027417">
    <property type="entry name" value="P-loop_NTPase"/>
</dbReference>
<dbReference type="Pfam" id="PF00693">
    <property type="entry name" value="Herpes_TK"/>
    <property type="match status" value="1"/>
</dbReference>
<dbReference type="SUPFAM" id="SSF52540">
    <property type="entry name" value="P-loop containing nucleoside triphosphate hydrolases"/>
    <property type="match status" value="1"/>
</dbReference>
<comment type="function">
    <text evidence="1">Catalyzes the transfer of the gamma-phospho group of ATP to thymidine to generate dTMP in the salvage pathway of pyrimidine synthesis. The dTMP serves as a substrate for DNA polymerase during viral DNA replication. Allows the virus to be reactivated and to grow in non-proliferative cells lacking a high concentration of phosphorylated nucleic acid precursors.</text>
</comment>
<comment type="catalytic activity">
    <reaction evidence="1">
        <text>thymidine + ATP = dTMP + ADP + H(+)</text>
        <dbReference type="Rhea" id="RHEA:19129"/>
        <dbReference type="ChEBI" id="CHEBI:15378"/>
        <dbReference type="ChEBI" id="CHEBI:17748"/>
        <dbReference type="ChEBI" id="CHEBI:30616"/>
        <dbReference type="ChEBI" id="CHEBI:63528"/>
        <dbReference type="ChEBI" id="CHEBI:456216"/>
        <dbReference type="EC" id="2.7.1.21"/>
    </reaction>
</comment>
<comment type="subunit">
    <text evidence="1">Homodimer.</text>
</comment>
<comment type="similarity">
    <text evidence="1">Belongs to the herpesviridae thymidine kinase family.</text>
</comment>
<evidence type="ECO:0000255" key="1">
    <source>
        <dbReference type="HAMAP-Rule" id="MF_04029"/>
    </source>
</evidence>
<reference key="1">
    <citation type="journal article" date="2000" name="J. Virol.">
        <title>The genome of a very virulent Marek's disease virus.</title>
        <authorList>
            <person name="Tulman E.R."/>
            <person name="Afonso C.L."/>
            <person name="Lu Z."/>
            <person name="Zsak L."/>
            <person name="Rock D.L."/>
            <person name="Kutish G.F."/>
        </authorList>
    </citation>
    <scope>NUCLEOTIDE SEQUENCE [LARGE SCALE GENOMIC DNA]</scope>
</reference>
<protein>
    <recommendedName>
        <fullName evidence="1">Thymidine kinase</fullName>
        <ecNumber evidence="1">2.7.1.21</ecNumber>
    </recommendedName>
</protein>
<name>KITH_GAHVM</name>
<organism>
    <name type="scientific">Gallid herpesvirus 2 (strain Chicken/Md5/ATCC VR-987)</name>
    <name type="common">GaHV-2</name>
    <name type="synonym">Marek's disease herpesvirus type 1</name>
    <dbReference type="NCBI Taxonomy" id="10389"/>
    <lineage>
        <taxon>Viruses</taxon>
        <taxon>Duplodnaviria</taxon>
        <taxon>Heunggongvirae</taxon>
        <taxon>Peploviricota</taxon>
        <taxon>Herviviricetes</taxon>
        <taxon>Herpesvirales</taxon>
        <taxon>Orthoherpesviridae</taxon>
        <taxon>Alphaherpesvirinae</taxon>
        <taxon>Mardivirus</taxon>
        <taxon>Mardivirus gallidalpha2</taxon>
        <taxon>Gallid alphaherpesvirus 2</taxon>
    </lineage>
</organism>
<proteinExistence type="inferred from homology"/>
<feature type="chain" id="PRO_0000406521" description="Thymidine kinase">
    <location>
        <begin position="1"/>
        <end position="352"/>
    </location>
</feature>
<feature type="active site" description="Proton acceptor" evidence="1">
    <location>
        <position position="54"/>
    </location>
</feature>
<feature type="binding site" evidence="1">
    <location>
        <begin position="26"/>
        <end position="33"/>
    </location>
    <ligand>
        <name>ATP</name>
        <dbReference type="ChEBI" id="CHEBI:30616"/>
    </ligand>
</feature>
<feature type="binding site" evidence="1">
    <location>
        <position position="95"/>
    </location>
    <ligand>
        <name>substrate</name>
    </ligand>
</feature>
<feature type="binding site" evidence="1">
    <location>
        <position position="185"/>
    </location>
    <ligand>
        <name>ATP</name>
        <dbReference type="ChEBI" id="CHEBI:30616"/>
    </ligand>
</feature>
<feature type="binding site" evidence="1">
    <location>
        <position position="191"/>
    </location>
    <ligand>
        <name>substrate</name>
    </ligand>
</feature>
<organismHost>
    <name type="scientific">Gallus gallus</name>
    <name type="common">Chicken</name>
    <dbReference type="NCBI Taxonomy" id="9031"/>
</organismHost>
<keyword id="KW-0067">ATP-binding</keyword>
<keyword id="KW-0237">DNA synthesis</keyword>
<keyword id="KW-0244">Early protein</keyword>
<keyword id="KW-0418">Kinase</keyword>
<keyword id="KW-0547">Nucleotide-binding</keyword>
<keyword id="KW-1185">Reference proteome</keyword>
<keyword id="KW-0808">Transferase</keyword>
<accession>Q9E6P5</accession>
<sequence>MSEPQSWSVMASQMTSAQLIRVYLDGSMGIGKTSMLNEIPTHSLMGVPVLKVFEPMKYWRYYFTDLVTTVNDTCDRRRRGEFSLFQSSMIVTALQSKFADPYLVFHERLSSKCHRITGTRGNPSLILILDRHPISATVCFPIARHLTGDCSLEMLISMIIRLPQEPPGCNLVIVDLHDEKEHVSRLSSRNRTGEKTDLLMLRALNAVYSCLVDTIMYANHICPYSKDEWESEWLDLPWFDTSLATTFINEPRTDYRGSRVSLHHTLLAIFKRRELCAEDGSLSTTHAWILWGLLMKLRNINVERFNITGLSTTKCVESFMDTMSERLVTHMSWNDAFEIEADVLAYNKEMAM</sequence>
<gene>
    <name evidence="1" type="primary">TK</name>
    <name type="ordered locus">MDV036</name>
</gene>